<feature type="chain" id="PRO_0000240577" description="Chorismate pyruvate-lyase">
    <location>
        <begin position="1"/>
        <end position="177"/>
    </location>
</feature>
<feature type="binding site" evidence="1">
    <location>
        <position position="37"/>
    </location>
    <ligand>
        <name>substrate</name>
    </ligand>
</feature>
<feature type="binding site" evidence="1">
    <location>
        <position position="79"/>
    </location>
    <ligand>
        <name>substrate</name>
    </ligand>
</feature>
<feature type="binding site" evidence="1">
    <location>
        <position position="117"/>
    </location>
    <ligand>
        <name>substrate</name>
    </ligand>
</feature>
<feature type="binding site" evidence="1">
    <location>
        <position position="159"/>
    </location>
    <ligand>
        <name>substrate</name>
    </ligand>
</feature>
<organism>
    <name type="scientific">Sodalis glossinidius (strain morsitans)</name>
    <dbReference type="NCBI Taxonomy" id="343509"/>
    <lineage>
        <taxon>Bacteria</taxon>
        <taxon>Pseudomonadati</taxon>
        <taxon>Pseudomonadota</taxon>
        <taxon>Gammaproteobacteria</taxon>
        <taxon>Enterobacterales</taxon>
        <taxon>Bruguierivoracaceae</taxon>
        <taxon>Sodalis</taxon>
    </lineage>
</organism>
<proteinExistence type="inferred from homology"/>
<keyword id="KW-0963">Cytoplasm</keyword>
<keyword id="KW-0456">Lyase</keyword>
<keyword id="KW-0670">Pyruvate</keyword>
<keyword id="KW-0831">Ubiquinone biosynthesis</keyword>
<comment type="function">
    <text evidence="1">Removes the pyruvyl group from chorismate, with concomitant aromatization of the ring, to provide 4-hydroxybenzoate (4HB) for the ubiquinone pathway.</text>
</comment>
<comment type="catalytic activity">
    <reaction evidence="1">
        <text>chorismate = 4-hydroxybenzoate + pyruvate</text>
        <dbReference type="Rhea" id="RHEA:16505"/>
        <dbReference type="ChEBI" id="CHEBI:15361"/>
        <dbReference type="ChEBI" id="CHEBI:17879"/>
        <dbReference type="ChEBI" id="CHEBI:29748"/>
        <dbReference type="EC" id="4.1.3.40"/>
    </reaction>
</comment>
<comment type="pathway">
    <text evidence="1">Cofactor biosynthesis; ubiquinone biosynthesis.</text>
</comment>
<comment type="subunit">
    <text evidence="1">Monomer.</text>
</comment>
<comment type="subcellular location">
    <subcellularLocation>
        <location evidence="1">Cytoplasm</location>
    </subcellularLocation>
</comment>
<comment type="similarity">
    <text evidence="1">Belongs to the UbiC family.</text>
</comment>
<comment type="sequence caution" evidence="2">
    <conflict type="erroneous initiation">
        <sequence resource="EMBL-CDS" id="BAE75419"/>
    </conflict>
    <text>Extended N-terminus.</text>
</comment>
<reference key="1">
    <citation type="journal article" date="2006" name="Genome Res.">
        <title>Massive genome erosion and functional adaptations provide insights into the symbiotic lifestyle of Sodalis glossinidius in the tsetse host.</title>
        <authorList>
            <person name="Toh H."/>
            <person name="Weiss B.L."/>
            <person name="Perkin S.A.H."/>
            <person name="Yamashita A."/>
            <person name="Oshima K."/>
            <person name="Hattori M."/>
            <person name="Aksoy S."/>
        </authorList>
    </citation>
    <scope>NUCLEOTIDE SEQUENCE [LARGE SCALE GENOMIC DNA]</scope>
    <source>
        <strain>morsitans</strain>
    </source>
</reference>
<accession>Q2NR06</accession>
<dbReference type="EC" id="4.1.3.40" evidence="1"/>
<dbReference type="EMBL" id="AP008232">
    <property type="protein sequence ID" value="BAE75419.1"/>
    <property type="status" value="ALT_INIT"/>
    <property type="molecule type" value="Genomic_DNA"/>
</dbReference>
<dbReference type="RefSeq" id="WP_011411956.1">
    <property type="nucleotide sequence ID" value="NC_007712.1"/>
</dbReference>
<dbReference type="SMR" id="Q2NR06"/>
<dbReference type="STRING" id="343509.SG2144"/>
<dbReference type="KEGG" id="sgl:SG2144"/>
<dbReference type="eggNOG" id="COG3161">
    <property type="taxonomic scope" value="Bacteria"/>
</dbReference>
<dbReference type="HOGENOM" id="CLU_096824_1_0_6"/>
<dbReference type="OrthoDB" id="9789493at2"/>
<dbReference type="BioCyc" id="SGLO343509:SGP1_RS19770-MONOMER"/>
<dbReference type="UniPathway" id="UPA00232"/>
<dbReference type="Proteomes" id="UP000001932">
    <property type="component" value="Chromosome"/>
</dbReference>
<dbReference type="GO" id="GO:0005829">
    <property type="term" value="C:cytosol"/>
    <property type="evidence" value="ECO:0007669"/>
    <property type="project" value="TreeGrafter"/>
</dbReference>
<dbReference type="GO" id="GO:0008813">
    <property type="term" value="F:chorismate lyase activity"/>
    <property type="evidence" value="ECO:0007669"/>
    <property type="project" value="UniProtKB-UniRule"/>
</dbReference>
<dbReference type="GO" id="GO:0042866">
    <property type="term" value="P:pyruvate biosynthetic process"/>
    <property type="evidence" value="ECO:0007669"/>
    <property type="project" value="UniProtKB-UniRule"/>
</dbReference>
<dbReference type="GO" id="GO:0006744">
    <property type="term" value="P:ubiquinone biosynthetic process"/>
    <property type="evidence" value="ECO:0007669"/>
    <property type="project" value="UniProtKB-UniRule"/>
</dbReference>
<dbReference type="Gene3D" id="3.40.1410.10">
    <property type="entry name" value="Chorismate lyase-like"/>
    <property type="match status" value="1"/>
</dbReference>
<dbReference type="HAMAP" id="MF_01632">
    <property type="entry name" value="UbiC"/>
    <property type="match status" value="1"/>
</dbReference>
<dbReference type="InterPro" id="IPR007440">
    <property type="entry name" value="Chorismate--pyruvate_lyase"/>
</dbReference>
<dbReference type="InterPro" id="IPR028978">
    <property type="entry name" value="Chorismate_lyase_/UTRA_dom_sf"/>
</dbReference>
<dbReference type="NCBIfam" id="NF008656">
    <property type="entry name" value="PRK11655.1"/>
    <property type="match status" value="1"/>
</dbReference>
<dbReference type="PANTHER" id="PTHR38683">
    <property type="entry name" value="CHORISMATE PYRUVATE-LYASE"/>
    <property type="match status" value="1"/>
</dbReference>
<dbReference type="PANTHER" id="PTHR38683:SF1">
    <property type="entry name" value="CHORISMATE PYRUVATE-LYASE"/>
    <property type="match status" value="1"/>
</dbReference>
<dbReference type="Pfam" id="PF04345">
    <property type="entry name" value="Chor_lyase"/>
    <property type="match status" value="1"/>
</dbReference>
<dbReference type="SUPFAM" id="SSF64288">
    <property type="entry name" value="Chorismate lyase-like"/>
    <property type="match status" value="1"/>
</dbReference>
<gene>
    <name evidence="1" type="primary">ubiC</name>
    <name type="ordered locus">SG2144</name>
</gene>
<sequence>MQDQAIVAILDGIRWLQEPPVWPDDATRSWLTERGSMTQRLEKHCGKIRVRRYREGFVTACIEAWEAALLPDCGRFWLREVVLYGHDRPWLTARTLVPAAAEAGPAQQVLSLGDVPLGQWLFRHRPPARDVIQFGRVGTLWARRARLRLTEGQPLLLTEAFLPDCPLYISGGDAPQQ</sequence>
<evidence type="ECO:0000255" key="1">
    <source>
        <dbReference type="HAMAP-Rule" id="MF_01632"/>
    </source>
</evidence>
<evidence type="ECO:0000305" key="2"/>
<protein>
    <recommendedName>
        <fullName evidence="1">Chorismate pyruvate-lyase</fullName>
        <shortName evidence="1">CL</shortName>
        <shortName evidence="1">CPL</shortName>
        <ecNumber evidence="1">4.1.3.40</ecNumber>
    </recommendedName>
</protein>
<name>UBIC_SODGM</name>